<feature type="chain" id="PRO_0000169625" description="Inner membrane protein YidG">
    <location>
        <begin position="1"/>
        <end position="120"/>
    </location>
</feature>
<feature type="topological domain" description="Cytoplasmic" evidence="2">
    <location>
        <begin position="1"/>
        <end position="21"/>
    </location>
</feature>
<feature type="transmembrane region" description="Helical" evidence="2">
    <location>
        <begin position="22"/>
        <end position="39"/>
    </location>
</feature>
<feature type="topological domain" description="Periplasmic" evidence="2">
    <location>
        <begin position="40"/>
        <end position="48"/>
    </location>
</feature>
<feature type="transmembrane region" description="Helical" evidence="2">
    <location>
        <begin position="49"/>
        <end position="68"/>
    </location>
</feature>
<feature type="topological domain" description="Cytoplasmic" evidence="2">
    <location>
        <begin position="69"/>
        <end position="90"/>
    </location>
</feature>
<feature type="transmembrane region" description="Helical" evidence="2">
    <location>
        <begin position="91"/>
        <end position="113"/>
    </location>
</feature>
<feature type="topological domain" description="Periplasmic" evidence="2">
    <location>
        <begin position="114"/>
        <end position="120"/>
    </location>
</feature>
<gene>
    <name type="primary">yidG</name>
    <name type="ordered locus">Z5170</name>
    <name type="ordered locus">ECs4616</name>
</gene>
<proteinExistence type="inferred from homology"/>
<comment type="subcellular location">
    <subcellularLocation>
        <location evidence="1">Cell inner membrane</location>
        <topology evidence="1">Multi-pass membrane protein</topology>
    </subcellularLocation>
</comment>
<reference key="1">
    <citation type="journal article" date="2001" name="Nature">
        <title>Genome sequence of enterohaemorrhagic Escherichia coli O157:H7.</title>
        <authorList>
            <person name="Perna N.T."/>
            <person name="Plunkett G. III"/>
            <person name="Burland V."/>
            <person name="Mau B."/>
            <person name="Glasner J.D."/>
            <person name="Rose D.J."/>
            <person name="Mayhew G.F."/>
            <person name="Evans P.S."/>
            <person name="Gregor J."/>
            <person name="Kirkpatrick H.A."/>
            <person name="Posfai G."/>
            <person name="Hackett J."/>
            <person name="Klink S."/>
            <person name="Boutin A."/>
            <person name="Shao Y."/>
            <person name="Miller L."/>
            <person name="Grotbeck E.J."/>
            <person name="Davis N.W."/>
            <person name="Lim A."/>
            <person name="Dimalanta E.T."/>
            <person name="Potamousis K."/>
            <person name="Apodaca J."/>
            <person name="Anantharaman T.S."/>
            <person name="Lin J."/>
            <person name="Yen G."/>
            <person name="Schwartz D.C."/>
            <person name="Welch R.A."/>
            <person name="Blattner F.R."/>
        </authorList>
    </citation>
    <scope>NUCLEOTIDE SEQUENCE [LARGE SCALE GENOMIC DNA]</scope>
    <source>
        <strain>O157:H7 / EDL933 / ATCC 700927 / EHEC</strain>
    </source>
</reference>
<reference key="2">
    <citation type="journal article" date="2001" name="DNA Res.">
        <title>Complete genome sequence of enterohemorrhagic Escherichia coli O157:H7 and genomic comparison with a laboratory strain K-12.</title>
        <authorList>
            <person name="Hayashi T."/>
            <person name="Makino K."/>
            <person name="Ohnishi M."/>
            <person name="Kurokawa K."/>
            <person name="Ishii K."/>
            <person name="Yokoyama K."/>
            <person name="Han C.-G."/>
            <person name="Ohtsubo E."/>
            <person name="Nakayama K."/>
            <person name="Murata T."/>
            <person name="Tanaka M."/>
            <person name="Tobe T."/>
            <person name="Iida T."/>
            <person name="Takami H."/>
            <person name="Honda T."/>
            <person name="Sasakawa C."/>
            <person name="Ogasawara N."/>
            <person name="Yasunaga T."/>
            <person name="Kuhara S."/>
            <person name="Shiba T."/>
            <person name="Hattori M."/>
            <person name="Shinagawa H."/>
        </authorList>
    </citation>
    <scope>NUCLEOTIDE SEQUENCE [LARGE SCALE GENOMIC DNA]</scope>
    <source>
        <strain>O157:H7 / Sakai / RIMD 0509952 / EHEC</strain>
    </source>
</reference>
<keyword id="KW-0997">Cell inner membrane</keyword>
<keyword id="KW-1003">Cell membrane</keyword>
<keyword id="KW-0472">Membrane</keyword>
<keyword id="KW-1185">Reference proteome</keyword>
<keyword id="KW-0812">Transmembrane</keyword>
<keyword id="KW-1133">Transmembrane helix</keyword>
<accession>P0ADL8</accession>
<accession>P31444</accession>
<dbReference type="EMBL" id="AE005174">
    <property type="protein sequence ID" value="AAG58878.1"/>
    <property type="molecule type" value="Genomic_DNA"/>
</dbReference>
<dbReference type="EMBL" id="BA000007">
    <property type="protein sequence ID" value="BAB38039.1"/>
    <property type="molecule type" value="Genomic_DNA"/>
</dbReference>
<dbReference type="PIR" id="B86052">
    <property type="entry name" value="B86052"/>
</dbReference>
<dbReference type="PIR" id="H91205">
    <property type="entry name" value="H91205"/>
</dbReference>
<dbReference type="RefSeq" id="NP_312643.1">
    <property type="nucleotide sequence ID" value="NC_002695.1"/>
</dbReference>
<dbReference type="RefSeq" id="WP_001113432.1">
    <property type="nucleotide sequence ID" value="NZ_VOAI01000011.1"/>
</dbReference>
<dbReference type="STRING" id="155864.Z5170"/>
<dbReference type="GeneID" id="915418"/>
<dbReference type="KEGG" id="ece:Z5170"/>
<dbReference type="KEGG" id="ecs:ECs_4616"/>
<dbReference type="PATRIC" id="fig|386585.9.peg.4822"/>
<dbReference type="eggNOG" id="ENOG5031J0W">
    <property type="taxonomic scope" value="Bacteria"/>
</dbReference>
<dbReference type="HOGENOM" id="CLU_150487_2_0_6"/>
<dbReference type="OMA" id="ILWRYTR"/>
<dbReference type="Proteomes" id="UP000000558">
    <property type="component" value="Chromosome"/>
</dbReference>
<dbReference type="Proteomes" id="UP000002519">
    <property type="component" value="Chromosome"/>
</dbReference>
<dbReference type="GO" id="GO:0005886">
    <property type="term" value="C:plasma membrane"/>
    <property type="evidence" value="ECO:0007669"/>
    <property type="project" value="UniProtKB-SubCell"/>
</dbReference>
<dbReference type="InterPro" id="IPR003807">
    <property type="entry name" value="DUF202"/>
</dbReference>
<dbReference type="Pfam" id="PF02656">
    <property type="entry name" value="DUF202"/>
    <property type="match status" value="1"/>
</dbReference>
<name>YIDG_ECO57</name>
<sequence>MPDSRKARRIADPGLQPERTSLAWFRTMLGYGALMALAIKHNWHQAGMLFWISIGILAIVALILWHYTRNRNLMDVTNSDFSQFHVVRDKFLISLAVLSLAILFAVTHIHQLIVFIERVA</sequence>
<protein>
    <recommendedName>
        <fullName>Inner membrane protein YidG</fullName>
    </recommendedName>
</protein>
<organism>
    <name type="scientific">Escherichia coli O157:H7</name>
    <dbReference type="NCBI Taxonomy" id="83334"/>
    <lineage>
        <taxon>Bacteria</taxon>
        <taxon>Pseudomonadati</taxon>
        <taxon>Pseudomonadota</taxon>
        <taxon>Gammaproteobacteria</taxon>
        <taxon>Enterobacterales</taxon>
        <taxon>Enterobacteriaceae</taxon>
        <taxon>Escherichia</taxon>
    </lineage>
</organism>
<evidence type="ECO:0000250" key="1"/>
<evidence type="ECO:0000255" key="2"/>